<sequence>MKVKSFAKIDLGYSVYKKRKNITKHDFESIFILVESVYDDIEIIKIDKNVDDVHYYNETNEIYVYSRLVYKTLEWIRQTYRIKNHYRINIKKRIPIGAGLGGGSSNAAVIMKSILELEGIKEINYKDVVNKLGADIPFFLSGYKTAYVSDCGSTLEDLSGQFKLSYEVHLMNVNVNTKLVFEKFDDNQWHVIKNNFKTIIKNLKENIVTNIYNDLQEHCFELYPNIRYKYNELLREGFYTILSGAGSSFICIKLKDKENQVIHEN</sequence>
<dbReference type="EC" id="2.7.1.148" evidence="1"/>
<dbReference type="EMBL" id="CP001184">
    <property type="protein sequence ID" value="ACI59757.1"/>
    <property type="molecule type" value="Genomic_DNA"/>
</dbReference>
<dbReference type="RefSeq" id="WP_004025775.1">
    <property type="nucleotide sequence ID" value="NC_011374.1"/>
</dbReference>
<dbReference type="SMR" id="B5ZCB5"/>
<dbReference type="STRING" id="565575.UUR10_0705"/>
<dbReference type="KEGG" id="uue:UUR10_0705"/>
<dbReference type="eggNOG" id="COG1947">
    <property type="taxonomic scope" value="Bacteria"/>
</dbReference>
<dbReference type="HOGENOM" id="CLU_053057_2_0_14"/>
<dbReference type="OrthoDB" id="389264at2"/>
<dbReference type="UniPathway" id="UPA00056">
    <property type="reaction ID" value="UER00094"/>
</dbReference>
<dbReference type="Proteomes" id="UP000002018">
    <property type="component" value="Chromosome"/>
</dbReference>
<dbReference type="GO" id="GO:0050515">
    <property type="term" value="F:4-(cytidine 5'-diphospho)-2-C-methyl-D-erythritol kinase activity"/>
    <property type="evidence" value="ECO:0007669"/>
    <property type="project" value="UniProtKB-UniRule"/>
</dbReference>
<dbReference type="GO" id="GO:0005524">
    <property type="term" value="F:ATP binding"/>
    <property type="evidence" value="ECO:0007669"/>
    <property type="project" value="UniProtKB-UniRule"/>
</dbReference>
<dbReference type="GO" id="GO:0019288">
    <property type="term" value="P:isopentenyl diphosphate biosynthetic process, methylerythritol 4-phosphate pathway"/>
    <property type="evidence" value="ECO:0007669"/>
    <property type="project" value="UniProtKB-UniRule"/>
</dbReference>
<dbReference type="GO" id="GO:0016114">
    <property type="term" value="P:terpenoid biosynthetic process"/>
    <property type="evidence" value="ECO:0007669"/>
    <property type="project" value="InterPro"/>
</dbReference>
<dbReference type="Gene3D" id="3.30.230.10">
    <property type="match status" value="1"/>
</dbReference>
<dbReference type="Gene3D" id="3.30.70.890">
    <property type="entry name" value="GHMP kinase, C-terminal domain"/>
    <property type="match status" value="1"/>
</dbReference>
<dbReference type="HAMAP" id="MF_00061">
    <property type="entry name" value="IspE"/>
    <property type="match status" value="1"/>
</dbReference>
<dbReference type="InterPro" id="IPR036554">
    <property type="entry name" value="GHMP_kinase_C_sf"/>
</dbReference>
<dbReference type="InterPro" id="IPR006204">
    <property type="entry name" value="GHMP_kinase_N_dom"/>
</dbReference>
<dbReference type="InterPro" id="IPR004424">
    <property type="entry name" value="IspE"/>
</dbReference>
<dbReference type="InterPro" id="IPR020568">
    <property type="entry name" value="Ribosomal_Su5_D2-typ_SF"/>
</dbReference>
<dbReference type="InterPro" id="IPR014721">
    <property type="entry name" value="Ribsml_uS5_D2-typ_fold_subgr"/>
</dbReference>
<dbReference type="NCBIfam" id="NF004568">
    <property type="entry name" value="PRK05905.1"/>
    <property type="match status" value="1"/>
</dbReference>
<dbReference type="PANTHER" id="PTHR43527">
    <property type="entry name" value="4-DIPHOSPHOCYTIDYL-2-C-METHYL-D-ERYTHRITOL KINASE, CHLOROPLASTIC"/>
    <property type="match status" value="1"/>
</dbReference>
<dbReference type="PANTHER" id="PTHR43527:SF2">
    <property type="entry name" value="4-DIPHOSPHOCYTIDYL-2-C-METHYL-D-ERYTHRITOL KINASE, CHLOROPLASTIC"/>
    <property type="match status" value="1"/>
</dbReference>
<dbReference type="Pfam" id="PF00288">
    <property type="entry name" value="GHMP_kinases_N"/>
    <property type="match status" value="1"/>
</dbReference>
<dbReference type="PIRSF" id="PIRSF010376">
    <property type="entry name" value="IspE"/>
    <property type="match status" value="1"/>
</dbReference>
<dbReference type="SUPFAM" id="SSF55060">
    <property type="entry name" value="GHMP Kinase, C-terminal domain"/>
    <property type="match status" value="1"/>
</dbReference>
<dbReference type="SUPFAM" id="SSF54211">
    <property type="entry name" value="Ribosomal protein S5 domain 2-like"/>
    <property type="match status" value="1"/>
</dbReference>
<feature type="chain" id="PRO_1000092122" description="4-diphosphocytidyl-2-C-methyl-D-erythritol kinase">
    <location>
        <begin position="1"/>
        <end position="265"/>
    </location>
</feature>
<feature type="active site" evidence="1">
    <location>
        <position position="8"/>
    </location>
</feature>
<feature type="active site" evidence="1">
    <location>
        <position position="135"/>
    </location>
</feature>
<feature type="binding site" evidence="1">
    <location>
        <begin position="95"/>
        <end position="105"/>
    </location>
    <ligand>
        <name>ATP</name>
        <dbReference type="ChEBI" id="CHEBI:30616"/>
    </ligand>
</feature>
<reference key="1">
    <citation type="submission" date="2008-10" db="EMBL/GenBank/DDBJ databases">
        <title>Genome sequence of Ureaplasma urealyticum serovar 10 ATCC-33699.</title>
        <authorList>
            <person name="Shrivastava S."/>
            <person name="Methe B.A."/>
            <person name="Glass J."/>
            <person name="White K."/>
            <person name="Duffy L.B."/>
        </authorList>
    </citation>
    <scope>NUCLEOTIDE SEQUENCE [LARGE SCALE GENOMIC DNA]</scope>
    <source>
        <strain>ATCC 33699 / Western</strain>
    </source>
</reference>
<keyword id="KW-0067">ATP-binding</keyword>
<keyword id="KW-0414">Isoprene biosynthesis</keyword>
<keyword id="KW-0418">Kinase</keyword>
<keyword id="KW-0547">Nucleotide-binding</keyword>
<keyword id="KW-0808">Transferase</keyword>
<proteinExistence type="inferred from homology"/>
<evidence type="ECO:0000255" key="1">
    <source>
        <dbReference type="HAMAP-Rule" id="MF_00061"/>
    </source>
</evidence>
<name>ISPE_UREU1</name>
<organism>
    <name type="scientific">Ureaplasma urealyticum serovar 10 (strain ATCC 33699 / Western)</name>
    <dbReference type="NCBI Taxonomy" id="565575"/>
    <lineage>
        <taxon>Bacteria</taxon>
        <taxon>Bacillati</taxon>
        <taxon>Mycoplasmatota</taxon>
        <taxon>Mycoplasmoidales</taxon>
        <taxon>Mycoplasmoidaceae</taxon>
        <taxon>Ureaplasma</taxon>
    </lineage>
</organism>
<comment type="function">
    <text evidence="1">Catalyzes the phosphorylation of the position 2 hydroxy group of 4-diphosphocytidyl-2C-methyl-D-erythritol.</text>
</comment>
<comment type="catalytic activity">
    <reaction evidence="1">
        <text>4-CDP-2-C-methyl-D-erythritol + ATP = 4-CDP-2-C-methyl-D-erythritol 2-phosphate + ADP + H(+)</text>
        <dbReference type="Rhea" id="RHEA:18437"/>
        <dbReference type="ChEBI" id="CHEBI:15378"/>
        <dbReference type="ChEBI" id="CHEBI:30616"/>
        <dbReference type="ChEBI" id="CHEBI:57823"/>
        <dbReference type="ChEBI" id="CHEBI:57919"/>
        <dbReference type="ChEBI" id="CHEBI:456216"/>
        <dbReference type="EC" id="2.7.1.148"/>
    </reaction>
</comment>
<comment type="pathway">
    <text evidence="1">Isoprenoid biosynthesis; isopentenyl diphosphate biosynthesis via DXP pathway; isopentenyl diphosphate from 1-deoxy-D-xylulose 5-phosphate: step 3/6.</text>
</comment>
<comment type="similarity">
    <text evidence="1">Belongs to the GHMP kinase family. IspE subfamily.</text>
</comment>
<gene>
    <name evidence="1" type="primary">ispE</name>
    <name type="ordered locus">UUR10_0705</name>
</gene>
<accession>B5ZCB5</accession>
<protein>
    <recommendedName>
        <fullName evidence="1">4-diphosphocytidyl-2-C-methyl-D-erythritol kinase</fullName>
        <shortName evidence="1">CMK</shortName>
        <ecNumber evidence="1">2.7.1.148</ecNumber>
    </recommendedName>
    <alternativeName>
        <fullName evidence="1">4-(cytidine-5'-diphospho)-2-C-methyl-D-erythritol kinase</fullName>
    </alternativeName>
</protein>